<keyword id="KW-0227">DNA damage</keyword>
<keyword id="KW-0234">DNA repair</keyword>
<keyword id="KW-0235">DNA replication</keyword>
<keyword id="KW-0436">Ligase</keyword>
<keyword id="KW-0460">Magnesium</keyword>
<keyword id="KW-0464">Manganese</keyword>
<keyword id="KW-0479">Metal-binding</keyword>
<keyword id="KW-0520">NAD</keyword>
<keyword id="KW-1185">Reference proteome</keyword>
<keyword id="KW-0862">Zinc</keyword>
<dbReference type="EC" id="6.5.1.2" evidence="1"/>
<dbReference type="EMBL" id="CP000270">
    <property type="protein sequence ID" value="ABE31279.1"/>
    <property type="molecule type" value="Genomic_DNA"/>
</dbReference>
<dbReference type="RefSeq" id="WP_011488871.1">
    <property type="nucleotide sequence ID" value="NC_007951.1"/>
</dbReference>
<dbReference type="SMR" id="Q13XB0"/>
<dbReference type="STRING" id="266265.Bxe_A1676"/>
<dbReference type="KEGG" id="bxb:DR64_3841"/>
<dbReference type="KEGG" id="bxe:Bxe_A1676"/>
<dbReference type="PATRIC" id="fig|266265.5.peg.2873"/>
<dbReference type="eggNOG" id="COG0272">
    <property type="taxonomic scope" value="Bacteria"/>
</dbReference>
<dbReference type="OrthoDB" id="9759736at2"/>
<dbReference type="Proteomes" id="UP000001817">
    <property type="component" value="Chromosome 1"/>
</dbReference>
<dbReference type="GO" id="GO:0005829">
    <property type="term" value="C:cytosol"/>
    <property type="evidence" value="ECO:0007669"/>
    <property type="project" value="TreeGrafter"/>
</dbReference>
<dbReference type="GO" id="GO:0003677">
    <property type="term" value="F:DNA binding"/>
    <property type="evidence" value="ECO:0007669"/>
    <property type="project" value="InterPro"/>
</dbReference>
<dbReference type="GO" id="GO:0003911">
    <property type="term" value="F:DNA ligase (NAD+) activity"/>
    <property type="evidence" value="ECO:0007669"/>
    <property type="project" value="UniProtKB-UniRule"/>
</dbReference>
<dbReference type="GO" id="GO:0046872">
    <property type="term" value="F:metal ion binding"/>
    <property type="evidence" value="ECO:0007669"/>
    <property type="project" value="UniProtKB-KW"/>
</dbReference>
<dbReference type="GO" id="GO:0006281">
    <property type="term" value="P:DNA repair"/>
    <property type="evidence" value="ECO:0007669"/>
    <property type="project" value="UniProtKB-KW"/>
</dbReference>
<dbReference type="GO" id="GO:0006260">
    <property type="term" value="P:DNA replication"/>
    <property type="evidence" value="ECO:0007669"/>
    <property type="project" value="UniProtKB-KW"/>
</dbReference>
<dbReference type="CDD" id="cd17748">
    <property type="entry name" value="BRCT_DNA_ligase_like"/>
    <property type="match status" value="1"/>
</dbReference>
<dbReference type="CDD" id="cd00114">
    <property type="entry name" value="LIGANc"/>
    <property type="match status" value="1"/>
</dbReference>
<dbReference type="FunFam" id="1.10.150.20:FF:000006">
    <property type="entry name" value="DNA ligase"/>
    <property type="match status" value="1"/>
</dbReference>
<dbReference type="FunFam" id="1.10.150.20:FF:000007">
    <property type="entry name" value="DNA ligase"/>
    <property type="match status" value="1"/>
</dbReference>
<dbReference type="FunFam" id="1.10.287.610:FF:000002">
    <property type="entry name" value="DNA ligase"/>
    <property type="match status" value="1"/>
</dbReference>
<dbReference type="FunFam" id="2.40.50.140:FF:000012">
    <property type="entry name" value="DNA ligase"/>
    <property type="match status" value="1"/>
</dbReference>
<dbReference type="FunFam" id="3.30.470.30:FF:000001">
    <property type="entry name" value="DNA ligase"/>
    <property type="match status" value="1"/>
</dbReference>
<dbReference type="FunFam" id="3.40.50.10190:FF:000054">
    <property type="entry name" value="DNA ligase"/>
    <property type="match status" value="1"/>
</dbReference>
<dbReference type="Gene3D" id="6.20.10.30">
    <property type="match status" value="1"/>
</dbReference>
<dbReference type="Gene3D" id="1.10.150.20">
    <property type="entry name" value="5' to 3' exonuclease, C-terminal subdomain"/>
    <property type="match status" value="2"/>
</dbReference>
<dbReference type="Gene3D" id="3.40.50.10190">
    <property type="entry name" value="BRCT domain"/>
    <property type="match status" value="1"/>
</dbReference>
<dbReference type="Gene3D" id="3.30.470.30">
    <property type="entry name" value="DNA ligase/mRNA capping enzyme"/>
    <property type="match status" value="1"/>
</dbReference>
<dbReference type="Gene3D" id="1.10.287.610">
    <property type="entry name" value="Helix hairpin bin"/>
    <property type="match status" value="1"/>
</dbReference>
<dbReference type="Gene3D" id="2.40.50.140">
    <property type="entry name" value="Nucleic acid-binding proteins"/>
    <property type="match status" value="1"/>
</dbReference>
<dbReference type="HAMAP" id="MF_01588">
    <property type="entry name" value="DNA_ligase_A"/>
    <property type="match status" value="1"/>
</dbReference>
<dbReference type="InterPro" id="IPR001357">
    <property type="entry name" value="BRCT_dom"/>
</dbReference>
<dbReference type="InterPro" id="IPR036420">
    <property type="entry name" value="BRCT_dom_sf"/>
</dbReference>
<dbReference type="InterPro" id="IPR041663">
    <property type="entry name" value="DisA/LigA_HHH"/>
</dbReference>
<dbReference type="InterPro" id="IPR001679">
    <property type="entry name" value="DNA_ligase"/>
</dbReference>
<dbReference type="InterPro" id="IPR018239">
    <property type="entry name" value="DNA_ligase_AS"/>
</dbReference>
<dbReference type="InterPro" id="IPR033136">
    <property type="entry name" value="DNA_ligase_CS"/>
</dbReference>
<dbReference type="InterPro" id="IPR013839">
    <property type="entry name" value="DNAligase_adenylation"/>
</dbReference>
<dbReference type="InterPro" id="IPR013840">
    <property type="entry name" value="DNAligase_N"/>
</dbReference>
<dbReference type="InterPro" id="IPR003583">
    <property type="entry name" value="Hlx-hairpin-Hlx_DNA-bd_motif"/>
</dbReference>
<dbReference type="InterPro" id="IPR012340">
    <property type="entry name" value="NA-bd_OB-fold"/>
</dbReference>
<dbReference type="InterPro" id="IPR004150">
    <property type="entry name" value="NAD_DNA_ligase_OB"/>
</dbReference>
<dbReference type="InterPro" id="IPR010994">
    <property type="entry name" value="RuvA_2-like"/>
</dbReference>
<dbReference type="InterPro" id="IPR004149">
    <property type="entry name" value="Znf_DNAligase_C4"/>
</dbReference>
<dbReference type="NCBIfam" id="TIGR00575">
    <property type="entry name" value="dnlj"/>
    <property type="match status" value="1"/>
</dbReference>
<dbReference type="NCBIfam" id="NF005932">
    <property type="entry name" value="PRK07956.1"/>
    <property type="match status" value="1"/>
</dbReference>
<dbReference type="PANTHER" id="PTHR23389">
    <property type="entry name" value="CHROMOSOME TRANSMISSION FIDELITY FACTOR 18"/>
    <property type="match status" value="1"/>
</dbReference>
<dbReference type="PANTHER" id="PTHR23389:SF9">
    <property type="entry name" value="DNA LIGASE"/>
    <property type="match status" value="1"/>
</dbReference>
<dbReference type="Pfam" id="PF00533">
    <property type="entry name" value="BRCT"/>
    <property type="match status" value="1"/>
</dbReference>
<dbReference type="Pfam" id="PF01653">
    <property type="entry name" value="DNA_ligase_aden"/>
    <property type="match status" value="1"/>
</dbReference>
<dbReference type="Pfam" id="PF03120">
    <property type="entry name" value="DNA_ligase_OB"/>
    <property type="match status" value="1"/>
</dbReference>
<dbReference type="Pfam" id="PF03119">
    <property type="entry name" value="DNA_ligase_ZBD"/>
    <property type="match status" value="1"/>
</dbReference>
<dbReference type="Pfam" id="PF12826">
    <property type="entry name" value="HHH_2"/>
    <property type="match status" value="1"/>
</dbReference>
<dbReference type="Pfam" id="PF14520">
    <property type="entry name" value="HHH_5"/>
    <property type="match status" value="1"/>
</dbReference>
<dbReference type="Pfam" id="PF22745">
    <property type="entry name" value="Nlig-Ia"/>
    <property type="match status" value="1"/>
</dbReference>
<dbReference type="PIRSF" id="PIRSF001604">
    <property type="entry name" value="LigA"/>
    <property type="match status" value="1"/>
</dbReference>
<dbReference type="SMART" id="SM00292">
    <property type="entry name" value="BRCT"/>
    <property type="match status" value="1"/>
</dbReference>
<dbReference type="SMART" id="SM00278">
    <property type="entry name" value="HhH1"/>
    <property type="match status" value="4"/>
</dbReference>
<dbReference type="SMART" id="SM00532">
    <property type="entry name" value="LIGANc"/>
    <property type="match status" value="1"/>
</dbReference>
<dbReference type="SUPFAM" id="SSF52113">
    <property type="entry name" value="BRCT domain"/>
    <property type="match status" value="1"/>
</dbReference>
<dbReference type="SUPFAM" id="SSF56091">
    <property type="entry name" value="DNA ligase/mRNA capping enzyme, catalytic domain"/>
    <property type="match status" value="1"/>
</dbReference>
<dbReference type="SUPFAM" id="SSF50249">
    <property type="entry name" value="Nucleic acid-binding proteins"/>
    <property type="match status" value="1"/>
</dbReference>
<dbReference type="SUPFAM" id="SSF47781">
    <property type="entry name" value="RuvA domain 2-like"/>
    <property type="match status" value="1"/>
</dbReference>
<dbReference type="PROSITE" id="PS50172">
    <property type="entry name" value="BRCT"/>
    <property type="match status" value="1"/>
</dbReference>
<dbReference type="PROSITE" id="PS01055">
    <property type="entry name" value="DNA_LIGASE_N1"/>
    <property type="match status" value="1"/>
</dbReference>
<dbReference type="PROSITE" id="PS01056">
    <property type="entry name" value="DNA_LIGASE_N2"/>
    <property type="match status" value="1"/>
</dbReference>
<accession>Q13XB0</accession>
<organism>
    <name type="scientific">Paraburkholderia xenovorans (strain LB400)</name>
    <dbReference type="NCBI Taxonomy" id="266265"/>
    <lineage>
        <taxon>Bacteria</taxon>
        <taxon>Pseudomonadati</taxon>
        <taxon>Pseudomonadota</taxon>
        <taxon>Betaproteobacteria</taxon>
        <taxon>Burkholderiales</taxon>
        <taxon>Burkholderiaceae</taxon>
        <taxon>Paraburkholderia</taxon>
    </lineage>
</organism>
<name>DNLJ_PARXL</name>
<gene>
    <name evidence="1" type="primary">ligA</name>
    <name type="ordered locus">Bxeno_A2741</name>
    <name type="ORF">Bxe_A1676</name>
</gene>
<sequence>MARTPVSPPATSAPAERAAWLRAELERANYAYYVLDQPDLPDAEYDRLFKELESIETEHPDLIVPDSPTQRVGGEAASGFEPVVHEQPMLSLNNGFADEDIVAFDKRVGDALGKNASEPPVPVEYAAELKFDGLAISLRYVDGVFVQASTRGDGTTGENVTENVRTIRSIPLRLKGKRVPHVLDVRGEVLMFKRDFERLNERQRAAEQKEFANPRNAAAGSLRQLDSKITAQRPLSFFSYGIGVLEGMDMPATHSELLDWYKELGLPVNGERAVVHGAEGLLGFFHAVGEKREKLPYDIDGVVYKVNRRDEQEALGFVSRAPRFALAHKFPAQEALTRLVAIDVQVGRTGAVTPVARLEPVFVGGATVTNATLHNEDEVRRKDIRIGDTVIVRRAGDVIPEVVSALLDRRPDDAREFVMPTHCPVCGSNIERLPDEAIARCTGGLFCPAQRKQALWHFAQRRALDIDGLGEKIIDQLVEQNLVRTPADLFNLGFATLAELDRFAEKSAQNLLDSLEKAKHTTLARFIYALGIRHVGESTAKDLAKHFGSLDPIMDASVEALLEVNDVGPVVAESIHQFFAEEHNRTVIEQLRAPGRVTWPEGPPAPKAPQGVLAGKTVVLTGTLPSLAREEAKEMLEAAGAKVAGSVSKKTDYVVAGAEAGSKLAKAEELGIPVLDEDGMRKLLEGQL</sequence>
<reference key="1">
    <citation type="journal article" date="2006" name="Proc. Natl. Acad. Sci. U.S.A.">
        <title>Burkholderia xenovorans LB400 harbors a multi-replicon, 9.73-Mbp genome shaped for versatility.</title>
        <authorList>
            <person name="Chain P.S.G."/>
            <person name="Denef V.J."/>
            <person name="Konstantinidis K.T."/>
            <person name="Vergez L.M."/>
            <person name="Agullo L."/>
            <person name="Reyes V.L."/>
            <person name="Hauser L."/>
            <person name="Cordova M."/>
            <person name="Gomez L."/>
            <person name="Gonzalez M."/>
            <person name="Land M."/>
            <person name="Lao V."/>
            <person name="Larimer F."/>
            <person name="LiPuma J.J."/>
            <person name="Mahenthiralingam E."/>
            <person name="Malfatti S.A."/>
            <person name="Marx C.J."/>
            <person name="Parnell J.J."/>
            <person name="Ramette A."/>
            <person name="Richardson P."/>
            <person name="Seeger M."/>
            <person name="Smith D."/>
            <person name="Spilker T."/>
            <person name="Sul W.J."/>
            <person name="Tsoi T.V."/>
            <person name="Ulrich L.E."/>
            <person name="Zhulin I.B."/>
            <person name="Tiedje J.M."/>
        </authorList>
    </citation>
    <scope>NUCLEOTIDE SEQUENCE [LARGE SCALE GENOMIC DNA]</scope>
    <source>
        <strain>LB400</strain>
    </source>
</reference>
<feature type="chain" id="PRO_0000313172" description="DNA ligase">
    <location>
        <begin position="1"/>
        <end position="688"/>
    </location>
</feature>
<feature type="domain" description="BRCT" evidence="1">
    <location>
        <begin position="608"/>
        <end position="688"/>
    </location>
</feature>
<feature type="active site" description="N6-AMP-lysine intermediate" evidence="1">
    <location>
        <position position="130"/>
    </location>
</feature>
<feature type="binding site" evidence="1">
    <location>
        <begin position="42"/>
        <end position="46"/>
    </location>
    <ligand>
        <name>NAD(+)</name>
        <dbReference type="ChEBI" id="CHEBI:57540"/>
    </ligand>
</feature>
<feature type="binding site" evidence="1">
    <location>
        <begin position="91"/>
        <end position="92"/>
    </location>
    <ligand>
        <name>NAD(+)</name>
        <dbReference type="ChEBI" id="CHEBI:57540"/>
    </ligand>
</feature>
<feature type="binding site" evidence="1">
    <location>
        <position position="128"/>
    </location>
    <ligand>
        <name>NAD(+)</name>
        <dbReference type="ChEBI" id="CHEBI:57540"/>
    </ligand>
</feature>
<feature type="binding site" evidence="1">
    <location>
        <position position="151"/>
    </location>
    <ligand>
        <name>NAD(+)</name>
        <dbReference type="ChEBI" id="CHEBI:57540"/>
    </ligand>
</feature>
<feature type="binding site" evidence="1">
    <location>
        <position position="188"/>
    </location>
    <ligand>
        <name>NAD(+)</name>
        <dbReference type="ChEBI" id="CHEBI:57540"/>
    </ligand>
</feature>
<feature type="binding site" evidence="1">
    <location>
        <position position="305"/>
    </location>
    <ligand>
        <name>NAD(+)</name>
        <dbReference type="ChEBI" id="CHEBI:57540"/>
    </ligand>
</feature>
<feature type="binding site" evidence="1">
    <location>
        <position position="329"/>
    </location>
    <ligand>
        <name>NAD(+)</name>
        <dbReference type="ChEBI" id="CHEBI:57540"/>
    </ligand>
</feature>
<feature type="binding site" evidence="1">
    <location>
        <position position="423"/>
    </location>
    <ligand>
        <name>Zn(2+)</name>
        <dbReference type="ChEBI" id="CHEBI:29105"/>
    </ligand>
</feature>
<feature type="binding site" evidence="1">
    <location>
        <position position="426"/>
    </location>
    <ligand>
        <name>Zn(2+)</name>
        <dbReference type="ChEBI" id="CHEBI:29105"/>
    </ligand>
</feature>
<feature type="binding site" evidence="1">
    <location>
        <position position="441"/>
    </location>
    <ligand>
        <name>Zn(2+)</name>
        <dbReference type="ChEBI" id="CHEBI:29105"/>
    </ligand>
</feature>
<feature type="binding site" evidence="1">
    <location>
        <position position="447"/>
    </location>
    <ligand>
        <name>Zn(2+)</name>
        <dbReference type="ChEBI" id="CHEBI:29105"/>
    </ligand>
</feature>
<proteinExistence type="inferred from homology"/>
<comment type="function">
    <text evidence="1">DNA ligase that catalyzes the formation of phosphodiester linkages between 5'-phosphoryl and 3'-hydroxyl groups in double-stranded DNA using NAD as a coenzyme and as the energy source for the reaction. It is essential for DNA replication and repair of damaged DNA.</text>
</comment>
<comment type="catalytic activity">
    <reaction evidence="1">
        <text>NAD(+) + (deoxyribonucleotide)n-3'-hydroxyl + 5'-phospho-(deoxyribonucleotide)m = (deoxyribonucleotide)n+m + AMP + beta-nicotinamide D-nucleotide.</text>
        <dbReference type="EC" id="6.5.1.2"/>
    </reaction>
</comment>
<comment type="cofactor">
    <cofactor evidence="1">
        <name>Mg(2+)</name>
        <dbReference type="ChEBI" id="CHEBI:18420"/>
    </cofactor>
    <cofactor evidence="1">
        <name>Mn(2+)</name>
        <dbReference type="ChEBI" id="CHEBI:29035"/>
    </cofactor>
</comment>
<comment type="similarity">
    <text evidence="1">Belongs to the NAD-dependent DNA ligase family. LigA subfamily.</text>
</comment>
<protein>
    <recommendedName>
        <fullName evidence="1">DNA ligase</fullName>
        <ecNumber evidence="1">6.5.1.2</ecNumber>
    </recommendedName>
    <alternativeName>
        <fullName evidence="1">Polydeoxyribonucleotide synthase [NAD(+)]</fullName>
    </alternativeName>
</protein>
<evidence type="ECO:0000255" key="1">
    <source>
        <dbReference type="HAMAP-Rule" id="MF_01588"/>
    </source>
</evidence>